<comment type="function">
    <text evidence="1">Secreted aspartic endopeptidase that allows assimilation of proteinaceous substrates. The scissile peptide bond is attacked by a nucleophilic water molecule activated by two aspartic residues in the active site. Shows a broad primary substrate specificity. Favors hydrophobic residues at the P1 and P1' positions, but can also activate trypsinogen and hydrolyze the B chain of insulin between positions 'Gly-20' and 'Glu-21'.</text>
</comment>
<comment type="catalytic activity">
    <reaction evidence="1">
        <text>Hydrolysis of proteins with broad specificity similar to that of pepsin A, preferring hydrophobic residues at P1 and P1', but also cleaving 20-Gly-|-Glu-21 in the B chain of insulin. Clots milk, and activates trypsinogen.</text>
        <dbReference type="EC" id="3.4.23.20"/>
    </reaction>
</comment>
<comment type="subunit">
    <text evidence="3">Monomer.</text>
</comment>
<comment type="subcellular location">
    <subcellularLocation>
        <location evidence="2">Secreted</location>
    </subcellularLocation>
</comment>
<comment type="similarity">
    <text evidence="6">Belongs to the peptidase A1 family.</text>
</comment>
<organism>
    <name type="scientific">Penicillium rubens (strain ATCC 28089 / DSM 1075 / NRRL 1951 / Wisconsin 54-1255)</name>
    <name type="common">Penicillium chrysogenum</name>
    <dbReference type="NCBI Taxonomy" id="500485"/>
    <lineage>
        <taxon>Eukaryota</taxon>
        <taxon>Fungi</taxon>
        <taxon>Dikarya</taxon>
        <taxon>Ascomycota</taxon>
        <taxon>Pezizomycotina</taxon>
        <taxon>Eurotiomycetes</taxon>
        <taxon>Eurotiomycetidae</taxon>
        <taxon>Eurotiales</taxon>
        <taxon>Aspergillaceae</taxon>
        <taxon>Penicillium</taxon>
        <taxon>Penicillium chrysogenum species complex</taxon>
    </lineage>
</organism>
<protein>
    <recommendedName>
        <fullName evidence="7">Penicillopepsin-1</fullName>
        <ecNumber evidence="1">3.4.23.20</ecNumber>
    </recommendedName>
    <alternativeName>
        <fullName>Aspartic protease pepA</fullName>
    </alternativeName>
</protein>
<evidence type="ECO:0000250" key="1">
    <source>
        <dbReference type="UniProtKB" id="P00798"/>
    </source>
</evidence>
<evidence type="ECO:0000250" key="2">
    <source>
        <dbReference type="UniProtKB" id="Q01972"/>
    </source>
</evidence>
<evidence type="ECO:0000250" key="3">
    <source>
        <dbReference type="UniProtKB" id="Q12567"/>
    </source>
</evidence>
<evidence type="ECO:0000255" key="4"/>
<evidence type="ECO:0000255" key="5">
    <source>
        <dbReference type="PROSITE-ProRule" id="PRU00498"/>
    </source>
</evidence>
<evidence type="ECO:0000255" key="6">
    <source>
        <dbReference type="PROSITE-ProRule" id="PRU01103"/>
    </source>
</evidence>
<evidence type="ECO:0000305" key="7"/>
<accession>B6HL60</accession>
<proteinExistence type="inferred from homology"/>
<dbReference type="EC" id="3.4.23.20" evidence="1"/>
<dbReference type="EMBL" id="AM920436">
    <property type="protein sequence ID" value="CAP95248.1"/>
    <property type="molecule type" value="Genomic_DNA"/>
</dbReference>
<dbReference type="RefSeq" id="XP_002567415.1">
    <property type="nucleotide sequence ID" value="XM_002567369.1"/>
</dbReference>
<dbReference type="SMR" id="B6HL60"/>
<dbReference type="STRING" id="500485.B6HL60"/>
<dbReference type="MEROPS" id="A01.026"/>
<dbReference type="GlyCosmos" id="B6HL60">
    <property type="glycosylation" value="1 site, No reported glycans"/>
</dbReference>
<dbReference type="GeneID" id="8313187"/>
<dbReference type="KEGG" id="pcs:N7525_006864"/>
<dbReference type="VEuPathDB" id="FungiDB:PCH_Pc21g03510"/>
<dbReference type="eggNOG" id="KOG1339">
    <property type="taxonomic scope" value="Eukaryota"/>
</dbReference>
<dbReference type="HOGENOM" id="CLU_013253_0_1_1"/>
<dbReference type="OMA" id="TKATFDW"/>
<dbReference type="OrthoDB" id="2747330at2759"/>
<dbReference type="BioCyc" id="PCHR:PC21G03510-MONOMER"/>
<dbReference type="Proteomes" id="UP000000724">
    <property type="component" value="Contig Pc00c21"/>
</dbReference>
<dbReference type="GO" id="GO:0005576">
    <property type="term" value="C:extracellular region"/>
    <property type="evidence" value="ECO:0007669"/>
    <property type="project" value="UniProtKB-SubCell"/>
</dbReference>
<dbReference type="GO" id="GO:0004190">
    <property type="term" value="F:aspartic-type endopeptidase activity"/>
    <property type="evidence" value="ECO:0007669"/>
    <property type="project" value="UniProtKB-KW"/>
</dbReference>
<dbReference type="GO" id="GO:0006508">
    <property type="term" value="P:proteolysis"/>
    <property type="evidence" value="ECO:0007669"/>
    <property type="project" value="UniProtKB-KW"/>
</dbReference>
<dbReference type="CDD" id="cd06097">
    <property type="entry name" value="Aspergillopepsin_like"/>
    <property type="match status" value="1"/>
</dbReference>
<dbReference type="FunFam" id="2.40.70.10:FF:000024">
    <property type="entry name" value="Endothiapepsin"/>
    <property type="match status" value="1"/>
</dbReference>
<dbReference type="FunFam" id="2.40.70.10:FF:000026">
    <property type="entry name" value="Endothiapepsin"/>
    <property type="match status" value="1"/>
</dbReference>
<dbReference type="Gene3D" id="2.40.70.10">
    <property type="entry name" value="Acid Proteases"/>
    <property type="match status" value="2"/>
</dbReference>
<dbReference type="InterPro" id="IPR001461">
    <property type="entry name" value="Aspartic_peptidase_A1"/>
</dbReference>
<dbReference type="InterPro" id="IPR001969">
    <property type="entry name" value="Aspartic_peptidase_AS"/>
</dbReference>
<dbReference type="InterPro" id="IPR034163">
    <property type="entry name" value="Aspergillopepsin-like_cat_dom"/>
</dbReference>
<dbReference type="InterPro" id="IPR033121">
    <property type="entry name" value="PEPTIDASE_A1"/>
</dbReference>
<dbReference type="InterPro" id="IPR021109">
    <property type="entry name" value="Peptidase_aspartic_dom_sf"/>
</dbReference>
<dbReference type="PANTHER" id="PTHR47966:SF2">
    <property type="entry name" value="ASPERGILLOPEPSIN-1-RELATED"/>
    <property type="match status" value="1"/>
</dbReference>
<dbReference type="PANTHER" id="PTHR47966">
    <property type="entry name" value="BETA-SITE APP-CLEAVING ENZYME, ISOFORM A-RELATED"/>
    <property type="match status" value="1"/>
</dbReference>
<dbReference type="Pfam" id="PF00026">
    <property type="entry name" value="Asp"/>
    <property type="match status" value="1"/>
</dbReference>
<dbReference type="PRINTS" id="PR00792">
    <property type="entry name" value="PEPSIN"/>
</dbReference>
<dbReference type="SUPFAM" id="SSF50630">
    <property type="entry name" value="Acid proteases"/>
    <property type="match status" value="1"/>
</dbReference>
<dbReference type="PROSITE" id="PS00141">
    <property type="entry name" value="ASP_PROTEASE"/>
    <property type="match status" value="2"/>
</dbReference>
<dbReference type="PROSITE" id="PS51767">
    <property type="entry name" value="PEPTIDASE_A1"/>
    <property type="match status" value="1"/>
</dbReference>
<feature type="signal peptide" evidence="4">
    <location>
        <begin position="1"/>
        <end position="20"/>
    </location>
</feature>
<feature type="propeptide" id="PRO_0000407054" description="Activation peptide" evidence="3">
    <location>
        <begin position="21"/>
        <end position="72"/>
    </location>
</feature>
<feature type="chain" id="PRO_5000409897" description="Penicillopepsin-1">
    <location>
        <begin position="73"/>
        <end position="396"/>
    </location>
</feature>
<feature type="domain" description="Peptidase A1" evidence="6">
    <location>
        <begin position="88"/>
        <end position="393"/>
    </location>
</feature>
<feature type="active site" evidence="6">
    <location>
        <position position="104"/>
    </location>
</feature>
<feature type="active site" evidence="6">
    <location>
        <position position="285"/>
    </location>
</feature>
<feature type="glycosylation site" description="N-linked (GlcNAc...) asparagine" evidence="5">
    <location>
        <position position="311"/>
    </location>
</feature>
<feature type="disulfide bond" evidence="6">
    <location>
        <begin position="321"/>
        <end position="356"/>
    </location>
</feature>
<name>PEPA_PENRW</name>
<reference key="1">
    <citation type="journal article" date="2008" name="Nat. Biotechnol.">
        <title>Genome sequencing and analysis of the filamentous fungus Penicillium chrysogenum.</title>
        <authorList>
            <person name="van den Berg M.A."/>
            <person name="Albang R."/>
            <person name="Albermann K."/>
            <person name="Badger J.H."/>
            <person name="Daran J.-M."/>
            <person name="Driessen A.J.M."/>
            <person name="Garcia-Estrada C."/>
            <person name="Fedorova N.D."/>
            <person name="Harris D.M."/>
            <person name="Heijne W.H.M."/>
            <person name="Joardar V.S."/>
            <person name="Kiel J.A.K.W."/>
            <person name="Kovalchuk A."/>
            <person name="Martin J.F."/>
            <person name="Nierman W.C."/>
            <person name="Nijland J.G."/>
            <person name="Pronk J.T."/>
            <person name="Roubos J.A."/>
            <person name="van der Klei I.J."/>
            <person name="van Peij N.N.M.E."/>
            <person name="Veenhuis M."/>
            <person name="von Doehren H."/>
            <person name="Wagner C."/>
            <person name="Wortman J.R."/>
            <person name="Bovenberg R.A.L."/>
        </authorList>
    </citation>
    <scope>NUCLEOTIDE SEQUENCE [LARGE SCALE GENOMIC DNA]</scope>
    <source>
        <strain>ATCC 28089 / DSM 1075 / NRRL 1951 / Wisconsin 54-1255</strain>
    </source>
</reference>
<gene>
    <name type="primary">pepA</name>
    <name type="ORF">Pc21g03510</name>
</gene>
<sequence>MVVFSKVTASLACFSAVVSAAAVPVKSPRQGFSVNQVQKTVTGTRTVNLPGVYANALAKYGATVPANVHAAAVSGSAITTPEENDVEYLTPVKIGESTLNLDFDTGSADLWVFSTELSSAEQSGHDVYDVSSSGKKLTGASWSISYGDGSGASGDVYKDTVTVGGVKATGQAVEAAKKISQQFVQDKSNDGLLGLAFSSINTVSPKPQTTFFDTVKSDLDKPLFAVTLKHGAPGTYDFGYIDKKKFTGSLTYTDVDNSQGFWSFTADSYKVGTGSAGPSIEGIADTGTTLLLLDDGVVSDYYKKVDGAKNNYSAGGYVFPCDADLPDFTVTIGSYDAVVPGKHIKYAPVTTGSSSCFGGIQSNSGIGFSIFGDIFLKSQYVVFDAEGPRLGFAAQA</sequence>
<keyword id="KW-0064">Aspartyl protease</keyword>
<keyword id="KW-1015">Disulfide bond</keyword>
<keyword id="KW-0325">Glycoprotein</keyword>
<keyword id="KW-0378">Hydrolase</keyword>
<keyword id="KW-0645">Protease</keyword>
<keyword id="KW-1185">Reference proteome</keyword>
<keyword id="KW-0964">Secreted</keyword>
<keyword id="KW-0732">Signal</keyword>
<keyword id="KW-0865">Zymogen</keyword>